<feature type="chain" id="PRO_0000333813" description="ATP-dependent RNA helicase TDRD9">
    <location>
        <begin position="1"/>
        <end position="1382"/>
    </location>
</feature>
<feature type="domain" description="Helicase ATP-binding" evidence="3">
    <location>
        <begin position="142"/>
        <end position="308"/>
    </location>
</feature>
<feature type="domain" description="Helicase C-terminal" evidence="4">
    <location>
        <begin position="377"/>
        <end position="544"/>
    </location>
</feature>
<feature type="domain" description="Tudor" evidence="2">
    <location>
        <begin position="944"/>
        <end position="1004"/>
    </location>
</feature>
<feature type="region of interest" description="Disordered" evidence="5">
    <location>
        <begin position="36"/>
        <end position="62"/>
    </location>
</feature>
<feature type="short sequence motif" description="DEAH box" evidence="1">
    <location>
        <begin position="254"/>
        <end position="257"/>
    </location>
</feature>
<feature type="compositionally biased region" description="Low complexity" evidence="5">
    <location>
        <begin position="47"/>
        <end position="62"/>
    </location>
</feature>
<feature type="binding site" evidence="3">
    <location>
        <begin position="155"/>
        <end position="162"/>
    </location>
    <ligand>
        <name>ATP</name>
        <dbReference type="ChEBI" id="CHEBI:30616"/>
    </ligand>
</feature>
<feature type="splice variant" id="VSP_033552" description="In isoform 2." evidence="7">
    <location>
        <begin position="1095"/>
        <end position="1285"/>
    </location>
</feature>
<feature type="sequence conflict" description="In Ref. 3; BAC05047." evidence="8" ref="3">
    <original>P</original>
    <variation>L</variation>
    <location>
        <position position="758"/>
    </location>
</feature>
<feature type="sequence conflict" description="In Ref. 4; AAH16796." evidence="8" ref="4">
    <original>T</original>
    <variation>G</variation>
    <location>
        <position position="1260"/>
    </location>
</feature>
<feature type="sequence conflict" description="In Ref. 3; BAC05144." evidence="8" ref="3">
    <original>V</original>
    <variation>F</variation>
    <location>
        <position position="1276"/>
    </location>
</feature>
<organism>
    <name type="scientific">Homo sapiens</name>
    <name type="common">Human</name>
    <dbReference type="NCBI Taxonomy" id="9606"/>
    <lineage>
        <taxon>Eukaryota</taxon>
        <taxon>Metazoa</taxon>
        <taxon>Chordata</taxon>
        <taxon>Craniata</taxon>
        <taxon>Vertebrata</taxon>
        <taxon>Euteleostomi</taxon>
        <taxon>Mammalia</taxon>
        <taxon>Eutheria</taxon>
        <taxon>Euarchontoglires</taxon>
        <taxon>Primates</taxon>
        <taxon>Haplorrhini</taxon>
        <taxon>Catarrhini</taxon>
        <taxon>Hominidae</taxon>
        <taxon>Homo</taxon>
    </lineage>
</organism>
<name>TDRD9_HUMAN</name>
<protein>
    <recommendedName>
        <fullName evidence="8">ATP-dependent RNA helicase TDRD9</fullName>
        <ecNumber evidence="1">3.6.4.13</ecNumber>
    </recommendedName>
    <alternativeName>
        <fullName evidence="8">Tudor domain-containing protein 9</fullName>
    </alternativeName>
</protein>
<accession>Q8NDG6</accession>
<accession>A1A4S7</accession>
<accession>Q6ZU54</accession>
<accession>Q8N7T3</accession>
<accession>Q8N827</accession>
<accession>Q8N9V5</accession>
<accession>Q96AS9</accession>
<evidence type="ECO:0000250" key="1">
    <source>
        <dbReference type="UniProtKB" id="Q14BI7"/>
    </source>
</evidence>
<evidence type="ECO:0000255" key="2">
    <source>
        <dbReference type="PROSITE-ProRule" id="PRU00211"/>
    </source>
</evidence>
<evidence type="ECO:0000255" key="3">
    <source>
        <dbReference type="PROSITE-ProRule" id="PRU00541"/>
    </source>
</evidence>
<evidence type="ECO:0000255" key="4">
    <source>
        <dbReference type="PROSITE-ProRule" id="PRU00542"/>
    </source>
</evidence>
<evidence type="ECO:0000256" key="5">
    <source>
        <dbReference type="SAM" id="MobiDB-lite"/>
    </source>
</evidence>
<evidence type="ECO:0000269" key="6">
    <source>
    </source>
</evidence>
<evidence type="ECO:0000303" key="7">
    <source>
    </source>
</evidence>
<evidence type="ECO:0000305" key="8"/>
<evidence type="ECO:0000312" key="9">
    <source>
        <dbReference type="HGNC" id="HGNC:20122"/>
    </source>
</evidence>
<keyword id="KW-0025">Alternative splicing</keyword>
<keyword id="KW-0067">ATP-binding</keyword>
<keyword id="KW-0963">Cytoplasm</keyword>
<keyword id="KW-0217">Developmental protein</keyword>
<keyword id="KW-0221">Differentiation</keyword>
<keyword id="KW-0347">Helicase</keyword>
<keyword id="KW-0378">Hydrolase</keyword>
<keyword id="KW-0469">Meiosis</keyword>
<keyword id="KW-0547">Nucleotide-binding</keyword>
<keyword id="KW-0539">Nucleus</keyword>
<keyword id="KW-1267">Proteomics identification</keyword>
<keyword id="KW-1185">Reference proteome</keyword>
<keyword id="KW-0943">RNA-mediated gene silencing</keyword>
<keyword id="KW-0744">Spermatogenesis</keyword>
<reference key="1">
    <citation type="journal article" date="2003" name="Nature">
        <title>The DNA sequence and analysis of human chromosome 14.</title>
        <authorList>
            <person name="Heilig R."/>
            <person name="Eckenberg R."/>
            <person name="Petit J.-L."/>
            <person name="Fonknechten N."/>
            <person name="Da Silva C."/>
            <person name="Cattolico L."/>
            <person name="Levy M."/>
            <person name="Barbe V."/>
            <person name="De Berardinis V."/>
            <person name="Ureta-Vidal A."/>
            <person name="Pelletier E."/>
            <person name="Vico V."/>
            <person name="Anthouard V."/>
            <person name="Rowen L."/>
            <person name="Madan A."/>
            <person name="Qin S."/>
            <person name="Sun H."/>
            <person name="Du H."/>
            <person name="Pepin K."/>
            <person name="Artiguenave F."/>
            <person name="Robert C."/>
            <person name="Cruaud C."/>
            <person name="Bruels T."/>
            <person name="Jaillon O."/>
            <person name="Friedlander L."/>
            <person name="Samson G."/>
            <person name="Brottier P."/>
            <person name="Cure S."/>
            <person name="Segurens B."/>
            <person name="Aniere F."/>
            <person name="Samain S."/>
            <person name="Crespeau H."/>
            <person name="Abbasi N."/>
            <person name="Aiach N."/>
            <person name="Boscus D."/>
            <person name="Dickhoff R."/>
            <person name="Dors M."/>
            <person name="Dubois I."/>
            <person name="Friedman C."/>
            <person name="Gouyvenoux M."/>
            <person name="James R."/>
            <person name="Madan A."/>
            <person name="Mairey-Estrada B."/>
            <person name="Mangenot S."/>
            <person name="Martins N."/>
            <person name="Menard M."/>
            <person name="Oztas S."/>
            <person name="Ratcliffe A."/>
            <person name="Shaffer T."/>
            <person name="Trask B."/>
            <person name="Vacherie B."/>
            <person name="Bellemere C."/>
            <person name="Belser C."/>
            <person name="Besnard-Gonnet M."/>
            <person name="Bartol-Mavel D."/>
            <person name="Boutard M."/>
            <person name="Briez-Silla S."/>
            <person name="Combette S."/>
            <person name="Dufosse-Laurent V."/>
            <person name="Ferron C."/>
            <person name="Lechaplais C."/>
            <person name="Louesse C."/>
            <person name="Muselet D."/>
            <person name="Magdelenat G."/>
            <person name="Pateau E."/>
            <person name="Petit E."/>
            <person name="Sirvain-Trukniewicz P."/>
            <person name="Trybou A."/>
            <person name="Vega-Czarny N."/>
            <person name="Bataille E."/>
            <person name="Bluet E."/>
            <person name="Bordelais I."/>
            <person name="Dubois M."/>
            <person name="Dumont C."/>
            <person name="Guerin T."/>
            <person name="Haffray S."/>
            <person name="Hammadi R."/>
            <person name="Muanga J."/>
            <person name="Pellouin V."/>
            <person name="Robert D."/>
            <person name="Wunderle E."/>
            <person name="Gauguet G."/>
            <person name="Roy A."/>
            <person name="Sainte-Marthe L."/>
            <person name="Verdier J."/>
            <person name="Verdier-Discala C."/>
            <person name="Hillier L.W."/>
            <person name="Fulton L."/>
            <person name="McPherson J."/>
            <person name="Matsuda F."/>
            <person name="Wilson R."/>
            <person name="Scarpelli C."/>
            <person name="Gyapay G."/>
            <person name="Wincker P."/>
            <person name="Saurin W."/>
            <person name="Quetier F."/>
            <person name="Waterston R."/>
            <person name="Hood L."/>
            <person name="Weissenbach J."/>
        </authorList>
    </citation>
    <scope>NUCLEOTIDE SEQUENCE [LARGE SCALE GENOMIC DNA]</scope>
</reference>
<reference key="2">
    <citation type="journal article" date="2007" name="BMC Genomics">
        <title>The full-ORF clone resource of the German cDNA consortium.</title>
        <authorList>
            <person name="Bechtel S."/>
            <person name="Rosenfelder H."/>
            <person name="Duda A."/>
            <person name="Schmidt C.P."/>
            <person name="Ernst U."/>
            <person name="Wellenreuther R."/>
            <person name="Mehrle A."/>
            <person name="Schuster C."/>
            <person name="Bahr A."/>
            <person name="Bloecker H."/>
            <person name="Heubner D."/>
            <person name="Hoerlein A."/>
            <person name="Michel G."/>
            <person name="Wedler H."/>
            <person name="Koehrer K."/>
            <person name="Ottenwaelder B."/>
            <person name="Poustka A."/>
            <person name="Wiemann S."/>
            <person name="Schupp I."/>
        </authorList>
    </citation>
    <scope>NUCLEOTIDE SEQUENCE [LARGE SCALE MRNA] OF 195-1382 (ISOFORM 1)</scope>
    <source>
        <tissue>Testis</tissue>
    </source>
</reference>
<reference key="3">
    <citation type="journal article" date="2004" name="Nat. Genet.">
        <title>Complete sequencing and characterization of 21,243 full-length human cDNAs.</title>
        <authorList>
            <person name="Ota T."/>
            <person name="Suzuki Y."/>
            <person name="Nishikawa T."/>
            <person name="Otsuki T."/>
            <person name="Sugiyama T."/>
            <person name="Irie R."/>
            <person name="Wakamatsu A."/>
            <person name="Hayashi K."/>
            <person name="Sato H."/>
            <person name="Nagai K."/>
            <person name="Kimura K."/>
            <person name="Makita H."/>
            <person name="Sekine M."/>
            <person name="Obayashi M."/>
            <person name="Nishi T."/>
            <person name="Shibahara T."/>
            <person name="Tanaka T."/>
            <person name="Ishii S."/>
            <person name="Yamamoto J."/>
            <person name="Saito K."/>
            <person name="Kawai Y."/>
            <person name="Isono Y."/>
            <person name="Nakamura Y."/>
            <person name="Nagahari K."/>
            <person name="Murakami K."/>
            <person name="Yasuda T."/>
            <person name="Iwayanagi T."/>
            <person name="Wagatsuma M."/>
            <person name="Shiratori A."/>
            <person name="Sudo H."/>
            <person name="Hosoiri T."/>
            <person name="Kaku Y."/>
            <person name="Kodaira H."/>
            <person name="Kondo H."/>
            <person name="Sugawara M."/>
            <person name="Takahashi M."/>
            <person name="Kanda K."/>
            <person name="Yokoi T."/>
            <person name="Furuya T."/>
            <person name="Kikkawa E."/>
            <person name="Omura Y."/>
            <person name="Abe K."/>
            <person name="Kamihara K."/>
            <person name="Katsuta N."/>
            <person name="Sato K."/>
            <person name="Tanikawa M."/>
            <person name="Yamazaki M."/>
            <person name="Ninomiya K."/>
            <person name="Ishibashi T."/>
            <person name="Yamashita H."/>
            <person name="Murakawa K."/>
            <person name="Fujimori K."/>
            <person name="Tanai H."/>
            <person name="Kimata M."/>
            <person name="Watanabe M."/>
            <person name="Hiraoka S."/>
            <person name="Chiba Y."/>
            <person name="Ishida S."/>
            <person name="Ono Y."/>
            <person name="Takiguchi S."/>
            <person name="Watanabe S."/>
            <person name="Yosida M."/>
            <person name="Hotuta T."/>
            <person name="Kusano J."/>
            <person name="Kanehori K."/>
            <person name="Takahashi-Fujii A."/>
            <person name="Hara H."/>
            <person name="Tanase T.-O."/>
            <person name="Nomura Y."/>
            <person name="Togiya S."/>
            <person name="Komai F."/>
            <person name="Hara R."/>
            <person name="Takeuchi K."/>
            <person name="Arita M."/>
            <person name="Imose N."/>
            <person name="Musashino K."/>
            <person name="Yuuki H."/>
            <person name="Oshima A."/>
            <person name="Sasaki N."/>
            <person name="Aotsuka S."/>
            <person name="Yoshikawa Y."/>
            <person name="Matsunawa H."/>
            <person name="Ichihara T."/>
            <person name="Shiohata N."/>
            <person name="Sano S."/>
            <person name="Moriya S."/>
            <person name="Momiyama H."/>
            <person name="Satoh N."/>
            <person name="Takami S."/>
            <person name="Terashima Y."/>
            <person name="Suzuki O."/>
            <person name="Nakagawa S."/>
            <person name="Senoh A."/>
            <person name="Mizoguchi H."/>
            <person name="Goto Y."/>
            <person name="Shimizu F."/>
            <person name="Wakebe H."/>
            <person name="Hishigaki H."/>
            <person name="Watanabe T."/>
            <person name="Sugiyama A."/>
            <person name="Takemoto M."/>
            <person name="Kawakami B."/>
            <person name="Yamazaki M."/>
            <person name="Watanabe K."/>
            <person name="Kumagai A."/>
            <person name="Itakura S."/>
            <person name="Fukuzumi Y."/>
            <person name="Fujimori Y."/>
            <person name="Komiyama M."/>
            <person name="Tashiro H."/>
            <person name="Tanigami A."/>
            <person name="Fujiwara T."/>
            <person name="Ono T."/>
            <person name="Yamada K."/>
            <person name="Fujii Y."/>
            <person name="Ozaki K."/>
            <person name="Hirao M."/>
            <person name="Ohmori Y."/>
            <person name="Kawabata A."/>
            <person name="Hikiji T."/>
            <person name="Kobatake N."/>
            <person name="Inagaki H."/>
            <person name="Ikema Y."/>
            <person name="Okamoto S."/>
            <person name="Okitani R."/>
            <person name="Kawakami T."/>
            <person name="Noguchi S."/>
            <person name="Itoh T."/>
            <person name="Shigeta K."/>
            <person name="Senba T."/>
            <person name="Matsumura K."/>
            <person name="Nakajima Y."/>
            <person name="Mizuno T."/>
            <person name="Morinaga M."/>
            <person name="Sasaki M."/>
            <person name="Togashi T."/>
            <person name="Oyama M."/>
            <person name="Hata H."/>
            <person name="Watanabe M."/>
            <person name="Komatsu T."/>
            <person name="Mizushima-Sugano J."/>
            <person name="Satoh T."/>
            <person name="Shirai Y."/>
            <person name="Takahashi Y."/>
            <person name="Nakagawa K."/>
            <person name="Okumura K."/>
            <person name="Nagase T."/>
            <person name="Nomura N."/>
            <person name="Kikuchi H."/>
            <person name="Masuho Y."/>
            <person name="Yamashita R."/>
            <person name="Nakai K."/>
            <person name="Yada T."/>
            <person name="Nakamura Y."/>
            <person name="Ohara O."/>
            <person name="Isogai T."/>
            <person name="Sugano S."/>
        </authorList>
    </citation>
    <scope>NUCLEOTIDE SEQUENCE [LARGE SCALE MRNA] OF 275-1382 (ISOFORM 2)</scope>
    <scope>NUCLEOTIDE SEQUENCE [LARGE SCALE MRNA] OF 635-1382 (ISOFORM 1)</scope>
    <source>
        <tissue>Testis</tissue>
    </source>
</reference>
<reference key="4">
    <citation type="journal article" date="2004" name="Genome Res.">
        <title>The status, quality, and expansion of the NIH full-length cDNA project: the Mammalian Gene Collection (MGC).</title>
        <authorList>
            <consortium name="The MGC Project Team"/>
        </authorList>
    </citation>
    <scope>NUCLEOTIDE SEQUENCE [LARGE SCALE MRNA] OF 278-1382 (ISOFORM 1)</scope>
    <source>
        <tissue>Bone marrow</tissue>
    </source>
</reference>
<reference key="5">
    <citation type="journal article" date="2017" name="J. Med. Genet.">
        <title>Mutation in TDRD9 causes non-obstructive azoospermia in infertile men.</title>
        <authorList>
            <person name="Arafat M."/>
            <person name="Har-Vardi I."/>
            <person name="Harlev A."/>
            <person name="Levitas E."/>
            <person name="Zeadna A."/>
            <person name="Abofoul-Azab M."/>
            <person name="Dyomin V."/>
            <person name="Sheffield V.C."/>
            <person name="Lunenfeld E."/>
            <person name="Huleihel M."/>
            <person name="Parvari R."/>
        </authorList>
    </citation>
    <scope>INVOLVEMENT IN SPGF30</scope>
    <scope>SUBCELLULAR LOCATION</scope>
    <scope>FUNCTION</scope>
</reference>
<proteinExistence type="evidence at protein level"/>
<comment type="function">
    <text evidence="1 6">ATP-binding RNA helicase required during spermatogenesis (PubMed:28536242). Required to repress transposable elements and prevent their mobilization, which is essential for the germline integrity. Acts via the piRNA metabolic process, which mediates the repression of transposable elements during meiosis by forming complexes composed of piRNAs and Piwi proteins and governs the methylation and subsequent repression of transposons. Acts downstream of piRNA biogenesis: exclusively required for transposon silencing in the nucleus, suggesting that it acts as a nuclear effector in the nucleus together with PIWIL4.</text>
</comment>
<comment type="catalytic activity">
    <reaction evidence="1">
        <text>ATP + H2O = ADP + phosphate + H(+)</text>
        <dbReference type="Rhea" id="RHEA:13065"/>
        <dbReference type="ChEBI" id="CHEBI:15377"/>
        <dbReference type="ChEBI" id="CHEBI:15378"/>
        <dbReference type="ChEBI" id="CHEBI:30616"/>
        <dbReference type="ChEBI" id="CHEBI:43474"/>
        <dbReference type="ChEBI" id="CHEBI:456216"/>
        <dbReference type="EC" id="3.6.4.13"/>
    </reaction>
</comment>
<comment type="subunit">
    <text evidence="6">Interacts with piRNA-associated proteins PIWIL1 and PIWIL4.</text>
</comment>
<comment type="subcellular location">
    <subcellularLocation>
        <location evidence="6">Cytoplasm</location>
    </subcellularLocation>
    <subcellularLocation>
        <location evidence="1">Nucleus</location>
    </subcellularLocation>
    <text evidence="1">Component of the nuage, also named P granule, a germ-cell-specific organelle required to repress transposon activity during meiosis. Specifically localizes to piP-bodies, a subset of the nuage which contains secondary piRNAs. PIWIL2 is required for its localization to piP-bodies.</text>
</comment>
<comment type="alternative products">
    <event type="alternative splicing"/>
    <isoform>
        <id>Q8NDG6-1</id>
        <name>1</name>
        <sequence type="displayed"/>
    </isoform>
    <isoform>
        <id>Q8NDG6-2</id>
        <name>2</name>
        <sequence type="described" ref="VSP_033552"/>
    </isoform>
</comment>
<comment type="disease" evidence="6">
    <disease id="DI-05324">
        <name>Spermatogenic failure 30</name>
        <acronym>SPGF30</acronym>
        <description>An autosomal recessive infertility disorder caused by spermatogenesis defects that result in non-obstructive azoospermia or cryptozoospermia.</description>
        <dbReference type="MIM" id="618110"/>
    </disease>
    <text>The disease is caused by variants affecting the gene represented in this entry.</text>
</comment>
<comment type="similarity">
    <text evidence="8">Belongs to the DEAD box helicase family. DEAH subfamily.</text>
</comment>
<comment type="sequence caution" evidence="8">
    <conflict type="erroneous initiation">
        <sequence resource="EMBL-CDS" id="AAI28058"/>
    </conflict>
    <text>Truncated N-terminus.</text>
</comment>
<comment type="sequence caution" evidence="8">
    <conflict type="frameshift">
        <sequence resource="EMBL-CDS" id="AAI28058"/>
    </conflict>
</comment>
<comment type="sequence caution" evidence="8">
    <conflict type="erroneous initiation">
        <sequence resource="EMBL-CDS" id="BAC04182"/>
    </conflict>
</comment>
<comment type="sequence caution" evidence="8">
    <conflict type="erroneous initiation">
        <sequence resource="EMBL-CDS" id="BAC05047"/>
    </conflict>
</comment>
<comment type="sequence caution" evidence="8">
    <conflict type="erroneous initiation">
        <sequence resource="EMBL-CDS" id="BAC05144"/>
    </conflict>
</comment>
<comment type="sequence caution" evidence="8">
    <conflict type="erroneous initiation">
        <sequence resource="EMBL-CDS" id="BAC86372"/>
    </conflict>
</comment>
<dbReference type="EC" id="3.6.4.13" evidence="1"/>
<dbReference type="EMBL" id="AL132712">
    <property type="status" value="NOT_ANNOTATED_CDS"/>
    <property type="molecule type" value="Genomic_DNA"/>
</dbReference>
<dbReference type="EMBL" id="AL136001">
    <property type="status" value="NOT_ANNOTATED_CDS"/>
    <property type="molecule type" value="Genomic_DNA"/>
</dbReference>
<dbReference type="EMBL" id="AL833915">
    <property type="protein sequence ID" value="CAD38771.1"/>
    <property type="molecule type" value="mRNA"/>
</dbReference>
<dbReference type="EMBL" id="AK093483">
    <property type="protein sequence ID" value="BAC04182.1"/>
    <property type="status" value="ALT_INIT"/>
    <property type="molecule type" value="mRNA"/>
</dbReference>
<dbReference type="EMBL" id="AK097429">
    <property type="protein sequence ID" value="BAC05047.1"/>
    <property type="status" value="ALT_INIT"/>
    <property type="molecule type" value="mRNA"/>
</dbReference>
<dbReference type="EMBL" id="AK097699">
    <property type="protein sequence ID" value="BAC05144.1"/>
    <property type="status" value="ALT_INIT"/>
    <property type="molecule type" value="mRNA"/>
</dbReference>
<dbReference type="EMBL" id="AK125978">
    <property type="protein sequence ID" value="BAC86372.1"/>
    <property type="status" value="ALT_INIT"/>
    <property type="molecule type" value="mRNA"/>
</dbReference>
<dbReference type="EMBL" id="BC016796">
    <property type="protein sequence ID" value="AAH16796.1"/>
    <property type="molecule type" value="mRNA"/>
</dbReference>
<dbReference type="EMBL" id="BC128057">
    <property type="protein sequence ID" value="AAI28058.1"/>
    <property type="status" value="ALT_SEQ"/>
    <property type="molecule type" value="mRNA"/>
</dbReference>
<dbReference type="CCDS" id="CCDS9987.2">
    <molecule id="Q8NDG6-1"/>
</dbReference>
<dbReference type="PIR" id="G02632">
    <property type="entry name" value="G02632"/>
</dbReference>
<dbReference type="RefSeq" id="NP_694591.2">
    <molecule id="Q8NDG6-1"/>
    <property type="nucleotide sequence ID" value="NM_153046.3"/>
</dbReference>
<dbReference type="SMR" id="Q8NDG6"/>
<dbReference type="BioGRID" id="125766">
    <property type="interactions" value="10"/>
</dbReference>
<dbReference type="FunCoup" id="Q8NDG6">
    <property type="interactions" value="154"/>
</dbReference>
<dbReference type="IntAct" id="Q8NDG6">
    <property type="interactions" value="3"/>
</dbReference>
<dbReference type="STRING" id="9606.ENSP00000387303"/>
<dbReference type="GlyGen" id="Q8NDG6">
    <property type="glycosylation" value="2 sites, 3 N-linked glycans (1 site)"/>
</dbReference>
<dbReference type="iPTMnet" id="Q8NDG6"/>
<dbReference type="PhosphoSitePlus" id="Q8NDG6"/>
<dbReference type="BioMuta" id="TDRD9"/>
<dbReference type="jPOST" id="Q8NDG6"/>
<dbReference type="MassIVE" id="Q8NDG6"/>
<dbReference type="PaxDb" id="9606-ENSP00000387303"/>
<dbReference type="PeptideAtlas" id="Q8NDG6"/>
<dbReference type="ProteomicsDB" id="73024">
    <molecule id="Q8NDG6-1"/>
</dbReference>
<dbReference type="ProteomicsDB" id="73025">
    <molecule id="Q8NDG6-2"/>
</dbReference>
<dbReference type="Pumba" id="Q8NDG6"/>
<dbReference type="Antibodypedia" id="47449">
    <property type="antibodies" value="68 antibodies from 15 providers"/>
</dbReference>
<dbReference type="DNASU" id="122402"/>
<dbReference type="Ensembl" id="ENST00000409874.9">
    <molecule id="Q8NDG6-1"/>
    <property type="protein sequence ID" value="ENSP00000387303.4"/>
    <property type="gene ID" value="ENSG00000156414.20"/>
</dbReference>
<dbReference type="GeneID" id="122402"/>
<dbReference type="KEGG" id="hsa:122402"/>
<dbReference type="MANE-Select" id="ENST00000409874.9">
    <property type="protein sequence ID" value="ENSP00000387303.4"/>
    <property type="RefSeq nucleotide sequence ID" value="NM_153046.3"/>
    <property type="RefSeq protein sequence ID" value="NP_694591.2"/>
</dbReference>
<dbReference type="UCSC" id="uc001yom.5">
    <molecule id="Q8NDG6-1"/>
    <property type="organism name" value="human"/>
</dbReference>
<dbReference type="AGR" id="HGNC:20122"/>
<dbReference type="CTD" id="122402"/>
<dbReference type="DisGeNET" id="122402"/>
<dbReference type="GeneCards" id="TDRD9"/>
<dbReference type="HGNC" id="HGNC:20122">
    <property type="gene designation" value="TDRD9"/>
</dbReference>
<dbReference type="HPA" id="ENSG00000156414">
    <property type="expression patterns" value="Group enriched (parathyroid gland, testis)"/>
</dbReference>
<dbReference type="MalaCards" id="TDRD9"/>
<dbReference type="MIM" id="617963">
    <property type="type" value="gene"/>
</dbReference>
<dbReference type="MIM" id="618110">
    <property type="type" value="phenotype"/>
</dbReference>
<dbReference type="neXtProt" id="NX_Q8NDG6"/>
<dbReference type="OpenTargets" id="ENSG00000156414"/>
<dbReference type="Orphanet" id="399805">
    <property type="disease" value="Male infertility with azoospermia or oligozoospermia due to single gene mutation"/>
</dbReference>
<dbReference type="PharmGKB" id="PA134890186"/>
<dbReference type="VEuPathDB" id="HostDB:ENSG00000156414"/>
<dbReference type="eggNOG" id="KOG0920">
    <property type="taxonomic scope" value="Eukaryota"/>
</dbReference>
<dbReference type="GeneTree" id="ENSGT00940000157035"/>
<dbReference type="HOGENOM" id="CLU_002601_1_0_1"/>
<dbReference type="InParanoid" id="Q8NDG6"/>
<dbReference type="OMA" id="QRSAYCS"/>
<dbReference type="OrthoDB" id="66977at2759"/>
<dbReference type="PAN-GO" id="Q8NDG6">
    <property type="GO annotations" value="3 GO annotations based on evolutionary models"/>
</dbReference>
<dbReference type="PhylomeDB" id="Q8NDG6"/>
<dbReference type="TreeFam" id="TF324869"/>
<dbReference type="PathwayCommons" id="Q8NDG6"/>
<dbReference type="Reactome" id="R-HSA-5601884">
    <property type="pathway name" value="PIWI-interacting RNA (piRNA) biogenesis"/>
</dbReference>
<dbReference type="SignaLink" id="Q8NDG6"/>
<dbReference type="BioGRID-ORCS" id="122402">
    <property type="hits" value="7 hits in 1151 CRISPR screens"/>
</dbReference>
<dbReference type="ChiTaRS" id="TDRD9">
    <property type="organism name" value="human"/>
</dbReference>
<dbReference type="GenomeRNAi" id="122402"/>
<dbReference type="Pharos" id="Q8NDG6">
    <property type="development level" value="Tbio"/>
</dbReference>
<dbReference type="PRO" id="PR:Q8NDG6"/>
<dbReference type="Proteomes" id="UP000005640">
    <property type="component" value="Chromosome 14"/>
</dbReference>
<dbReference type="RNAct" id="Q8NDG6">
    <property type="molecule type" value="protein"/>
</dbReference>
<dbReference type="Bgee" id="ENSG00000156414">
    <property type="expression patterns" value="Expressed in right testis and 126 other cell types or tissues"/>
</dbReference>
<dbReference type="ExpressionAtlas" id="Q8NDG6">
    <property type="expression patterns" value="baseline and differential"/>
</dbReference>
<dbReference type="GO" id="GO:0005737">
    <property type="term" value="C:cytoplasm"/>
    <property type="evidence" value="ECO:0000314"/>
    <property type="project" value="UniProtKB"/>
</dbReference>
<dbReference type="GO" id="GO:0005634">
    <property type="term" value="C:nucleus"/>
    <property type="evidence" value="ECO:0000314"/>
    <property type="project" value="UniProtKB"/>
</dbReference>
<dbReference type="GO" id="GO:0071547">
    <property type="term" value="C:piP-body"/>
    <property type="evidence" value="ECO:0000250"/>
    <property type="project" value="UniProtKB"/>
</dbReference>
<dbReference type="GO" id="GO:0005524">
    <property type="term" value="F:ATP binding"/>
    <property type="evidence" value="ECO:0007669"/>
    <property type="project" value="UniProtKB-KW"/>
</dbReference>
<dbReference type="GO" id="GO:0016887">
    <property type="term" value="F:ATP hydrolysis activity"/>
    <property type="evidence" value="ECO:0000250"/>
    <property type="project" value="UniProtKB"/>
</dbReference>
<dbReference type="GO" id="GO:0004386">
    <property type="term" value="F:helicase activity"/>
    <property type="evidence" value="ECO:0000318"/>
    <property type="project" value="GO_Central"/>
</dbReference>
<dbReference type="GO" id="GO:0003723">
    <property type="term" value="F:RNA binding"/>
    <property type="evidence" value="ECO:0000318"/>
    <property type="project" value="GO_Central"/>
</dbReference>
<dbReference type="GO" id="GO:0003724">
    <property type="term" value="F:RNA helicase activity"/>
    <property type="evidence" value="ECO:0007669"/>
    <property type="project" value="UniProtKB-EC"/>
</dbReference>
<dbReference type="GO" id="GO:0030154">
    <property type="term" value="P:cell differentiation"/>
    <property type="evidence" value="ECO:0007669"/>
    <property type="project" value="UniProtKB-KW"/>
</dbReference>
<dbReference type="GO" id="GO:0009566">
    <property type="term" value="P:fertilization"/>
    <property type="evidence" value="ECO:0000250"/>
    <property type="project" value="UniProtKB"/>
</dbReference>
<dbReference type="GO" id="GO:0007141">
    <property type="term" value="P:male meiosis I"/>
    <property type="evidence" value="ECO:0000250"/>
    <property type="project" value="UniProtKB"/>
</dbReference>
<dbReference type="GO" id="GO:0007140">
    <property type="term" value="P:male meiotic nuclear division"/>
    <property type="evidence" value="ECO:0000250"/>
    <property type="project" value="UniProtKB"/>
</dbReference>
<dbReference type="GO" id="GO:0034587">
    <property type="term" value="P:piRNA processing"/>
    <property type="evidence" value="ECO:0000250"/>
    <property type="project" value="UniProtKB"/>
</dbReference>
<dbReference type="GO" id="GO:0007283">
    <property type="term" value="P:spermatogenesis"/>
    <property type="evidence" value="ECO:0000315"/>
    <property type="project" value="UniProtKB"/>
</dbReference>
<dbReference type="GO" id="GO:0141196">
    <property type="term" value="P:transposable element silencing by piRNA-mediated DNA methylation"/>
    <property type="evidence" value="ECO:0000250"/>
    <property type="project" value="UniProtKB"/>
</dbReference>
<dbReference type="GO" id="GO:0141006">
    <property type="term" value="P:transposable element silencing by piRNA-mediated heterochromatin formation"/>
    <property type="evidence" value="ECO:0000250"/>
    <property type="project" value="UniProtKB"/>
</dbReference>
<dbReference type="CDD" id="cd17988">
    <property type="entry name" value="DEXHc_TDRD9"/>
    <property type="match status" value="1"/>
</dbReference>
<dbReference type="CDD" id="cd18791">
    <property type="entry name" value="SF2_C_RHA"/>
    <property type="match status" value="1"/>
</dbReference>
<dbReference type="CDD" id="cd20431">
    <property type="entry name" value="Tudor_TDRD9"/>
    <property type="match status" value="1"/>
</dbReference>
<dbReference type="FunFam" id="2.30.30.140:FF:000073">
    <property type="entry name" value="ATP-dependent RNA helicase TDRD9"/>
    <property type="match status" value="1"/>
</dbReference>
<dbReference type="FunFam" id="3.40.50.300:FF:001113">
    <property type="entry name" value="ATP-dependent RNA helicase TDRD9"/>
    <property type="match status" value="1"/>
</dbReference>
<dbReference type="FunFam" id="1.20.120.1080:FF:000012">
    <property type="entry name" value="putative ATP-dependent RNA helicase TDRD9"/>
    <property type="match status" value="1"/>
</dbReference>
<dbReference type="FunFam" id="3.40.50.300:FF:000946">
    <property type="entry name" value="putative ATP-dependent RNA helicase TDRD9"/>
    <property type="match status" value="1"/>
</dbReference>
<dbReference type="FunFam" id="2.40.50.90:FF:000016">
    <property type="entry name" value="Tudor domain containing 9"/>
    <property type="match status" value="1"/>
</dbReference>
<dbReference type="Gene3D" id="1.20.120.1080">
    <property type="match status" value="1"/>
</dbReference>
<dbReference type="Gene3D" id="2.30.30.140">
    <property type="match status" value="1"/>
</dbReference>
<dbReference type="Gene3D" id="2.40.50.90">
    <property type="match status" value="1"/>
</dbReference>
<dbReference type="Gene3D" id="3.40.50.300">
    <property type="entry name" value="P-loop containing nucleotide triphosphate hydrolases"/>
    <property type="match status" value="2"/>
</dbReference>
<dbReference type="InterPro" id="IPR011545">
    <property type="entry name" value="DEAD/DEAH_box_helicase_dom"/>
</dbReference>
<dbReference type="InterPro" id="IPR007502">
    <property type="entry name" value="Helicase-assoc_dom"/>
</dbReference>
<dbReference type="InterPro" id="IPR014001">
    <property type="entry name" value="Helicase_ATP-bd"/>
</dbReference>
<dbReference type="InterPro" id="IPR001650">
    <property type="entry name" value="Helicase_C-like"/>
</dbReference>
<dbReference type="InterPro" id="IPR027417">
    <property type="entry name" value="P-loop_NTPase"/>
</dbReference>
<dbReference type="InterPro" id="IPR035437">
    <property type="entry name" value="SNase_OB-fold_sf"/>
</dbReference>
<dbReference type="InterPro" id="IPR002999">
    <property type="entry name" value="Tudor"/>
</dbReference>
<dbReference type="InterPro" id="IPR047384">
    <property type="entry name" value="Tudor_TDRD9"/>
</dbReference>
<dbReference type="PANTHER" id="PTHR18934">
    <property type="entry name" value="ATP-DEPENDENT RNA HELICASE"/>
    <property type="match status" value="1"/>
</dbReference>
<dbReference type="PANTHER" id="PTHR18934:SF113">
    <property type="entry name" value="ATP-DEPENDENT RNA HELICASE TDRD9"/>
    <property type="match status" value="1"/>
</dbReference>
<dbReference type="Pfam" id="PF00270">
    <property type="entry name" value="DEAD"/>
    <property type="match status" value="1"/>
</dbReference>
<dbReference type="Pfam" id="PF21010">
    <property type="entry name" value="HA2_C"/>
    <property type="match status" value="1"/>
</dbReference>
<dbReference type="Pfam" id="PF00271">
    <property type="entry name" value="Helicase_C"/>
    <property type="match status" value="1"/>
</dbReference>
<dbReference type="Pfam" id="PF00567">
    <property type="entry name" value="TUDOR"/>
    <property type="match status" value="1"/>
</dbReference>
<dbReference type="SMART" id="SM00487">
    <property type="entry name" value="DEXDc"/>
    <property type="match status" value="1"/>
</dbReference>
<dbReference type="SMART" id="SM00847">
    <property type="entry name" value="HA2"/>
    <property type="match status" value="1"/>
</dbReference>
<dbReference type="SMART" id="SM00490">
    <property type="entry name" value="HELICc"/>
    <property type="match status" value="1"/>
</dbReference>
<dbReference type="SMART" id="SM00333">
    <property type="entry name" value="TUDOR"/>
    <property type="match status" value="1"/>
</dbReference>
<dbReference type="SUPFAM" id="SSF52540">
    <property type="entry name" value="P-loop containing nucleoside triphosphate hydrolases"/>
    <property type="match status" value="1"/>
</dbReference>
<dbReference type="SUPFAM" id="SSF63748">
    <property type="entry name" value="Tudor/PWWP/MBT"/>
    <property type="match status" value="1"/>
</dbReference>
<dbReference type="PROSITE" id="PS51192">
    <property type="entry name" value="HELICASE_ATP_BIND_1"/>
    <property type="match status" value="1"/>
</dbReference>
<dbReference type="PROSITE" id="PS51194">
    <property type="entry name" value="HELICASE_CTER"/>
    <property type="match status" value="1"/>
</dbReference>
<dbReference type="PROSITE" id="PS50304">
    <property type="entry name" value="TUDOR"/>
    <property type="match status" value="1"/>
</dbReference>
<gene>
    <name evidence="9" type="primary">TDRD9</name>
    <name evidence="9" type="synonym">C14orf75</name>
</gene>
<sequence>MLRKLTIEQINDWFTIGKTVTNVELLGAPPAFPAGAAREEVQRQDVAPGAGPAAQAPALAQAPARPAAAFERSLSQRSSEVEYINKYRQLEAQELDVCRSVQPTSGPGPRPSLAKLSSVTCIPGTTYKYPDLPISRYKEEVVSLIESNSVVIIHGATGSGKSTQLPQYILDHYVQRSAYCSIVVTQPRKIGASSIARWISKERAWTLGGVVGYQVGLEKIATEDTRLIYMTTGVLLQKIVSAKSLMEFTHIIIDEVHERTEEMDFLLLVVRKLLRTNSRFVKVVLMSATISCKEFADYFAVPVQNKMNPAYIFEVEGKPHSVEEYYLNDLEHIHHSKLSPHLLEEPVITKDIYEVAVSLIQMFDDLDMKESGNKAWSGAQFVLERSSVLVFLPGLGEINYMHELLTSLVHKRLQVYPLHSSVALEEQNNVFLSPVPGYRKIILSTNIAESSVTVPDVKYVIDFCLTRTLVCDEDTNYQSLRLSWASKTSCNQRKGRAGRVSRGYCYRLVHKDFWDNSIPDHVVPEMLRCPLGSTILKVKLLDMGEPRALLATALSPPGLSDIERTILLLKEVGALAVSGQREDENPHDGELTFLGRVLAQLPVNQQLGKLIVLGHVFGCLDECLIIAAALSLKNFFAMPFRQHLDGYRNKVNFSGSSKSDCIALVEAFKTWKACRQTGELRYPKDELNWGRLNYIQIKRIREVAELYEELKTRISQFNMHVDSRRPVMDQEYIYKQRFILQVVLAGAFYPNYFTFGQPDEEMAVRELAGKDPKTTVVLKHIPPYGFLYYKQLQSLFRQCGQVKSIVFDGAKAFVEFSRNPTERFKTLPAVYMAIKMSQLKVSLELSVHSAEEIEGKVQGMNVSKLRNTRVNVDFQKQTVDPMQVSFNTSDRSQTVTDLLLTIDVTEVVEVGHFWGYRIDENNSEILKKLTAEINQLTLVPLPTHPHPDLVCLAPFADFDKQRYFRAQVLYVSGNSAEVFFVDYGNKSHVDLHLLMEIPCQFLELPFQALEFKICKMRPSAKSLVCGKHWSDGASQWFASLVSGCTLLVKVFSVVHSVLHVDVYQYSGVQDAINIRDVLIQQGYAELTEESYESKQSHEVLKGLFSKSVENMTDGSVPFPMKDDEKYLIRILLESFSTNKLGTPNCKAELHGPFNPYELKCHSLTRISKFRCVWIEKESINSVIISDAPEDLHQRMLVAASLSINATGSTMLLRETSLMPHIPGLPALLSMLFAPVIELRIDQNGKYYTGVLCGLGWNPATGASILPEHDMELAFDVQFSVEDVVEVNILRAAINKLVCDGPNGCKCLGPERVAQLQDIARQKLLGLFCQSKPREKIVPKWHEKPYEWNQVDPKLVMEQADRESSRGKNTFLYQLHKLVVLGT</sequence>